<reference key="1">
    <citation type="journal article" date="2009" name="BMC Genomics">
        <title>Metabolic analysis of the soil microbe Dechloromonas aromatica str. RCB: indications of a surprisingly complex life-style and cryptic anaerobic pathways for aromatic degradation.</title>
        <authorList>
            <person name="Salinero K.K."/>
            <person name="Keller K."/>
            <person name="Feil W.S."/>
            <person name="Feil H."/>
            <person name="Trong S."/>
            <person name="Di Bartolo G."/>
            <person name="Lapidus A."/>
        </authorList>
    </citation>
    <scope>NUCLEOTIDE SEQUENCE [LARGE SCALE GENOMIC DNA]</scope>
    <source>
        <strain>RCB</strain>
    </source>
</reference>
<proteinExistence type="inferred from homology"/>
<name>PYRB_DECAR</name>
<keyword id="KW-0665">Pyrimidine biosynthesis</keyword>
<keyword id="KW-0808">Transferase</keyword>
<accession>Q478W3</accession>
<comment type="function">
    <text evidence="1">Catalyzes the condensation of carbamoyl phosphate and aspartate to form carbamoyl aspartate and inorganic phosphate, the committed step in the de novo pyrimidine nucleotide biosynthesis pathway.</text>
</comment>
<comment type="catalytic activity">
    <reaction evidence="1">
        <text>carbamoyl phosphate + L-aspartate = N-carbamoyl-L-aspartate + phosphate + H(+)</text>
        <dbReference type="Rhea" id="RHEA:20013"/>
        <dbReference type="ChEBI" id="CHEBI:15378"/>
        <dbReference type="ChEBI" id="CHEBI:29991"/>
        <dbReference type="ChEBI" id="CHEBI:32814"/>
        <dbReference type="ChEBI" id="CHEBI:43474"/>
        <dbReference type="ChEBI" id="CHEBI:58228"/>
        <dbReference type="EC" id="2.1.3.2"/>
    </reaction>
</comment>
<comment type="pathway">
    <text evidence="1">Pyrimidine metabolism; UMP biosynthesis via de novo pathway; (S)-dihydroorotate from bicarbonate: step 2/3.</text>
</comment>
<comment type="subunit">
    <text evidence="1">Heterododecamer (2C3:3R2) of six catalytic PyrB chains organized as two trimers (C3), and six regulatory PyrI chains organized as three dimers (R2).</text>
</comment>
<comment type="similarity">
    <text evidence="1">Belongs to the aspartate/ornithine carbamoyltransferase superfamily. ATCase family.</text>
</comment>
<evidence type="ECO:0000255" key="1">
    <source>
        <dbReference type="HAMAP-Rule" id="MF_00001"/>
    </source>
</evidence>
<sequence>MYNPQLNKNGELSHLLSVEGLPKAILNQILDTAASFMEVSAREVKKVPLLRGKSVFNLFFENSTRTRTTFEIAAKRLSADVINLDINKSSASKGETLLDTIDNLCAMHANLFVVRHASSGAPYLIAEHLQRVGRDDIHVVNAGDGRHAHPTQGLLDMYTIRHYKKDFTQLRVAIVGDILHSRVARSDIHALTTLGVPEVRAIGPETLLPKHLDKLGVHVFHDMNEGLKDCDVVIMLRLQNERMTGALLPSAGEYFRHYGLTPQKLALAKPDAIVMHPGPMNRGVEIHSAVADGSQAVILPQVTFGIAVRMAVMSIVAGN</sequence>
<organism>
    <name type="scientific">Dechloromonas aromatica (strain RCB)</name>
    <dbReference type="NCBI Taxonomy" id="159087"/>
    <lineage>
        <taxon>Bacteria</taxon>
        <taxon>Pseudomonadati</taxon>
        <taxon>Pseudomonadota</taxon>
        <taxon>Betaproteobacteria</taxon>
        <taxon>Rhodocyclales</taxon>
        <taxon>Azonexaceae</taxon>
        <taxon>Dechloromonas</taxon>
    </lineage>
</organism>
<gene>
    <name evidence="1" type="primary">pyrB</name>
    <name type="ordered locus">Daro_3890</name>
</gene>
<protein>
    <recommendedName>
        <fullName evidence="1">Aspartate carbamoyltransferase catalytic subunit</fullName>
        <ecNumber evidence="1">2.1.3.2</ecNumber>
    </recommendedName>
    <alternativeName>
        <fullName evidence="1">Aspartate transcarbamylase</fullName>
        <shortName evidence="1">ATCase</shortName>
    </alternativeName>
</protein>
<dbReference type="EC" id="2.1.3.2" evidence="1"/>
<dbReference type="EMBL" id="CP000089">
    <property type="protein sequence ID" value="AAZ48618.1"/>
    <property type="molecule type" value="Genomic_DNA"/>
</dbReference>
<dbReference type="SMR" id="Q478W3"/>
<dbReference type="STRING" id="159087.Daro_3890"/>
<dbReference type="KEGG" id="dar:Daro_3890"/>
<dbReference type="eggNOG" id="COG0540">
    <property type="taxonomic scope" value="Bacteria"/>
</dbReference>
<dbReference type="HOGENOM" id="CLU_043846_2_0_4"/>
<dbReference type="OrthoDB" id="9774690at2"/>
<dbReference type="UniPathway" id="UPA00070">
    <property type="reaction ID" value="UER00116"/>
</dbReference>
<dbReference type="GO" id="GO:0005829">
    <property type="term" value="C:cytosol"/>
    <property type="evidence" value="ECO:0007669"/>
    <property type="project" value="TreeGrafter"/>
</dbReference>
<dbReference type="GO" id="GO:0016597">
    <property type="term" value="F:amino acid binding"/>
    <property type="evidence" value="ECO:0007669"/>
    <property type="project" value="InterPro"/>
</dbReference>
<dbReference type="GO" id="GO:0004070">
    <property type="term" value="F:aspartate carbamoyltransferase activity"/>
    <property type="evidence" value="ECO:0007669"/>
    <property type="project" value="UniProtKB-UniRule"/>
</dbReference>
<dbReference type="GO" id="GO:0006207">
    <property type="term" value="P:'de novo' pyrimidine nucleobase biosynthetic process"/>
    <property type="evidence" value="ECO:0007669"/>
    <property type="project" value="InterPro"/>
</dbReference>
<dbReference type="GO" id="GO:0044205">
    <property type="term" value="P:'de novo' UMP biosynthetic process"/>
    <property type="evidence" value="ECO:0007669"/>
    <property type="project" value="UniProtKB-UniRule"/>
</dbReference>
<dbReference type="GO" id="GO:0006520">
    <property type="term" value="P:amino acid metabolic process"/>
    <property type="evidence" value="ECO:0007669"/>
    <property type="project" value="InterPro"/>
</dbReference>
<dbReference type="FunFam" id="3.40.50.1370:FF:000007">
    <property type="entry name" value="Aspartate carbamoyltransferase"/>
    <property type="match status" value="1"/>
</dbReference>
<dbReference type="Gene3D" id="3.40.50.1370">
    <property type="entry name" value="Aspartate/ornithine carbamoyltransferase"/>
    <property type="match status" value="2"/>
</dbReference>
<dbReference type="HAMAP" id="MF_00001">
    <property type="entry name" value="Asp_carb_tr"/>
    <property type="match status" value="1"/>
</dbReference>
<dbReference type="InterPro" id="IPR006132">
    <property type="entry name" value="Asp/Orn_carbamoyltranf_P-bd"/>
</dbReference>
<dbReference type="InterPro" id="IPR006130">
    <property type="entry name" value="Asp/Orn_carbamoylTrfase"/>
</dbReference>
<dbReference type="InterPro" id="IPR036901">
    <property type="entry name" value="Asp/Orn_carbamoylTrfase_sf"/>
</dbReference>
<dbReference type="InterPro" id="IPR002082">
    <property type="entry name" value="Asp_carbamoyltransf"/>
</dbReference>
<dbReference type="InterPro" id="IPR006131">
    <property type="entry name" value="Asp_carbamoyltransf_Asp/Orn-bd"/>
</dbReference>
<dbReference type="NCBIfam" id="TIGR00670">
    <property type="entry name" value="asp_carb_tr"/>
    <property type="match status" value="1"/>
</dbReference>
<dbReference type="NCBIfam" id="NF002032">
    <property type="entry name" value="PRK00856.1"/>
    <property type="match status" value="1"/>
</dbReference>
<dbReference type="PANTHER" id="PTHR45753:SF6">
    <property type="entry name" value="ASPARTATE CARBAMOYLTRANSFERASE"/>
    <property type="match status" value="1"/>
</dbReference>
<dbReference type="PANTHER" id="PTHR45753">
    <property type="entry name" value="ORNITHINE CARBAMOYLTRANSFERASE, MITOCHONDRIAL"/>
    <property type="match status" value="1"/>
</dbReference>
<dbReference type="Pfam" id="PF00185">
    <property type="entry name" value="OTCace"/>
    <property type="match status" value="1"/>
</dbReference>
<dbReference type="Pfam" id="PF02729">
    <property type="entry name" value="OTCace_N"/>
    <property type="match status" value="1"/>
</dbReference>
<dbReference type="PRINTS" id="PR00100">
    <property type="entry name" value="AOTCASE"/>
</dbReference>
<dbReference type="PRINTS" id="PR00101">
    <property type="entry name" value="ATCASE"/>
</dbReference>
<dbReference type="SUPFAM" id="SSF53671">
    <property type="entry name" value="Aspartate/ornithine carbamoyltransferase"/>
    <property type="match status" value="1"/>
</dbReference>
<dbReference type="PROSITE" id="PS00097">
    <property type="entry name" value="CARBAMOYLTRANSFERASE"/>
    <property type="match status" value="1"/>
</dbReference>
<feature type="chain" id="PRO_0000301567" description="Aspartate carbamoyltransferase catalytic subunit">
    <location>
        <begin position="1"/>
        <end position="319"/>
    </location>
</feature>
<feature type="binding site" evidence="1">
    <location>
        <position position="65"/>
    </location>
    <ligand>
        <name>carbamoyl phosphate</name>
        <dbReference type="ChEBI" id="CHEBI:58228"/>
    </ligand>
</feature>
<feature type="binding site" evidence="1">
    <location>
        <position position="66"/>
    </location>
    <ligand>
        <name>carbamoyl phosphate</name>
        <dbReference type="ChEBI" id="CHEBI:58228"/>
    </ligand>
</feature>
<feature type="binding site" evidence="1">
    <location>
        <position position="93"/>
    </location>
    <ligand>
        <name>L-aspartate</name>
        <dbReference type="ChEBI" id="CHEBI:29991"/>
    </ligand>
</feature>
<feature type="binding site" evidence="1">
    <location>
        <position position="115"/>
    </location>
    <ligand>
        <name>carbamoyl phosphate</name>
        <dbReference type="ChEBI" id="CHEBI:58228"/>
    </ligand>
</feature>
<feature type="binding site" evidence="1">
    <location>
        <position position="149"/>
    </location>
    <ligand>
        <name>carbamoyl phosphate</name>
        <dbReference type="ChEBI" id="CHEBI:58228"/>
    </ligand>
</feature>
<feature type="binding site" evidence="1">
    <location>
        <position position="152"/>
    </location>
    <ligand>
        <name>carbamoyl phosphate</name>
        <dbReference type="ChEBI" id="CHEBI:58228"/>
    </ligand>
</feature>
<feature type="binding site" evidence="1">
    <location>
        <position position="182"/>
    </location>
    <ligand>
        <name>L-aspartate</name>
        <dbReference type="ChEBI" id="CHEBI:29991"/>
    </ligand>
</feature>
<feature type="binding site" evidence="1">
    <location>
        <position position="237"/>
    </location>
    <ligand>
        <name>L-aspartate</name>
        <dbReference type="ChEBI" id="CHEBI:29991"/>
    </ligand>
</feature>
<feature type="binding site" evidence="1">
    <location>
        <position position="278"/>
    </location>
    <ligand>
        <name>carbamoyl phosphate</name>
        <dbReference type="ChEBI" id="CHEBI:58228"/>
    </ligand>
</feature>
<feature type="binding site" evidence="1">
    <location>
        <position position="279"/>
    </location>
    <ligand>
        <name>carbamoyl phosphate</name>
        <dbReference type="ChEBI" id="CHEBI:58228"/>
    </ligand>
</feature>